<accession>Q9D2J4</accession>
<accession>Q9D9J0</accession>
<accession>Q9DA22</accession>
<comment type="subcellular location">
    <subcellularLocation>
        <location evidence="5">Membrane</location>
        <topology evidence="5">Single-pass type I membrane protein</topology>
    </subcellularLocation>
</comment>
<comment type="alternative products">
    <event type="alternative splicing"/>
    <isoform>
        <id>Q9D2J4-1</id>
        <name>1</name>
        <sequence type="displayed"/>
    </isoform>
    <isoform>
        <id>Q9D2J4-2</id>
        <name>2</name>
        <sequence type="described" ref="VSP_030028"/>
    </isoform>
</comment>
<feature type="signal peptide" evidence="1">
    <location>
        <begin position="1"/>
        <end position="22"/>
    </location>
</feature>
<feature type="chain" id="PRO_0000313574" description="V-set and immunoglobulin domain-containing protein 1">
    <location>
        <begin position="23"/>
        <end position="407"/>
    </location>
</feature>
<feature type="topological domain" description="Extracellular" evidence="1">
    <location>
        <begin position="23"/>
        <end position="234"/>
    </location>
</feature>
<feature type="transmembrane region" description="Helical" evidence="1">
    <location>
        <begin position="235"/>
        <end position="255"/>
    </location>
</feature>
<feature type="topological domain" description="Cytoplasmic" evidence="1">
    <location>
        <begin position="256"/>
        <end position="407"/>
    </location>
</feature>
<feature type="domain" description="Ig-like V-type">
    <location>
        <begin position="23"/>
        <end position="134"/>
    </location>
</feature>
<feature type="domain" description="Ig-like C2-type">
    <location>
        <begin position="145"/>
        <end position="229"/>
    </location>
</feature>
<feature type="region of interest" description="Disordered" evidence="3">
    <location>
        <begin position="268"/>
        <end position="289"/>
    </location>
</feature>
<feature type="region of interest" description="Disordered" evidence="3">
    <location>
        <begin position="318"/>
        <end position="407"/>
    </location>
</feature>
<feature type="compositionally biased region" description="Acidic residues" evidence="3">
    <location>
        <begin position="361"/>
        <end position="371"/>
    </location>
</feature>
<feature type="modified residue" description="Phosphoserine" evidence="6">
    <location>
        <position position="273"/>
    </location>
</feature>
<feature type="modified residue" description="Phosphoserine" evidence="6">
    <location>
        <position position="274"/>
    </location>
</feature>
<feature type="glycosylation site" description="N-linked (GlcNAc...) asparagine" evidence="1">
    <location>
        <position position="39"/>
    </location>
</feature>
<feature type="glycosylation site" description="N-linked (GlcNAc...) asparagine" evidence="1">
    <location>
        <position position="202"/>
    </location>
</feature>
<feature type="glycosylation site" description="N-linked (GlcNAc...) asparagine" evidence="1">
    <location>
        <position position="221"/>
    </location>
</feature>
<feature type="disulfide bond" evidence="2">
    <location>
        <begin position="44"/>
        <end position="118"/>
    </location>
</feature>
<feature type="disulfide bond" evidence="2">
    <location>
        <begin position="163"/>
        <end position="213"/>
    </location>
</feature>
<feature type="splice variant" id="VSP_030028" description="In isoform 2." evidence="4">
    <location>
        <begin position="1"/>
        <end position="107"/>
    </location>
</feature>
<feature type="sequence conflict" description="In Ref. 2; BAB24483/BAB24769." evidence="5" ref="2">
    <original>H</original>
    <variation>D</variation>
    <location>
        <position position="125"/>
    </location>
</feature>
<feature type="sequence conflict" description="In Ref. 2; BAB24483/BAB24769." evidence="5" ref="2">
    <original>N</original>
    <variation>K</variation>
    <location>
        <position position="178"/>
    </location>
</feature>
<feature type="sequence conflict" description="In Ref. 2; BAB24483." evidence="5" ref="2">
    <original>S</original>
    <variation>T</variation>
    <location>
        <position position="223"/>
    </location>
</feature>
<feature type="sequence conflict" description="In Ref. 2; BAB24769." evidence="5" ref="2">
    <original>E</original>
    <variation>K</variation>
    <location>
        <position position="322"/>
    </location>
</feature>
<name>VSIG1_MOUSE</name>
<gene>
    <name type="primary">Vsig1</name>
    <name type="synonym">Gpa34</name>
</gene>
<protein>
    <recommendedName>
        <fullName>V-set and immunoglobulin domain-containing protein 1</fullName>
    </recommendedName>
    <alternativeName>
        <fullName>Cell surface A33 antigen</fullName>
    </alternativeName>
    <alternativeName>
        <fullName>Glycoprotein A34</fullName>
    </alternativeName>
</protein>
<sequence>MMVFAFWKVFLILNCLAGQVSMVQVTIPDTFVNVTVGSNVTLLCLYTTTEKSLEKLSIQWSFFHNKEMEEPISIYYSEGGQASAIGQFKDRIIGATNPGNASITILHMQPADSGIYICDVNNPPHFVGKNQGLLDVTVLVKPSKPFCTIQGRPEAGHPISLSCLSAFGTPSPLYYWYNIEGNTIVPVKESFNTATGVLVIGNLTNFEQGYYQCTAINSLGNSSCEIDLTSSHPEVGIIIGALVGALIGAAVIICVVYFARNKVKSKQQKNLNSSTELEPMTKVHHPQQSEAISADGVQLEGTLPSSIHAGHNTEPTTTAVLEPEYEPNPPLETTTQPDPEPEGSVPVLAPEAEIQPHPELDPETETEPEPEPEPKPEPEPEPELEPDPQSGVIIEPLSKAGEDTVKA</sequence>
<evidence type="ECO:0000255" key="1"/>
<evidence type="ECO:0000255" key="2">
    <source>
        <dbReference type="PROSITE-ProRule" id="PRU00114"/>
    </source>
</evidence>
<evidence type="ECO:0000256" key="3">
    <source>
        <dbReference type="SAM" id="MobiDB-lite"/>
    </source>
</evidence>
<evidence type="ECO:0000303" key="4">
    <source>
    </source>
</evidence>
<evidence type="ECO:0000305" key="5"/>
<evidence type="ECO:0007744" key="6">
    <source>
    </source>
</evidence>
<dbReference type="EMBL" id="DQ007336">
    <property type="protein sequence ID" value="AAY56125.1"/>
    <property type="molecule type" value="mRNA"/>
</dbReference>
<dbReference type="EMBL" id="AK006251">
    <property type="protein sequence ID" value="BAB24483.1"/>
    <property type="molecule type" value="mRNA"/>
</dbReference>
<dbReference type="EMBL" id="AK006862">
    <property type="protein sequence ID" value="BAB24769.1"/>
    <property type="molecule type" value="mRNA"/>
</dbReference>
<dbReference type="EMBL" id="AK019565">
    <property type="protein sequence ID" value="BAB31795.1"/>
    <property type="molecule type" value="mRNA"/>
</dbReference>
<dbReference type="CCDS" id="CCDS30443.1">
    <molecule id="Q9D2J4-1"/>
</dbReference>
<dbReference type="RefSeq" id="NP_080379.1">
    <property type="nucleotide sequence ID" value="NM_026103.1"/>
</dbReference>
<dbReference type="SMR" id="Q9D2J4"/>
<dbReference type="FunCoup" id="Q9D2J4">
    <property type="interactions" value="805"/>
</dbReference>
<dbReference type="STRING" id="10090.ENSMUSP00000033806"/>
<dbReference type="GlyCosmos" id="Q9D2J4">
    <property type="glycosylation" value="3 sites, No reported glycans"/>
</dbReference>
<dbReference type="GlyGen" id="Q9D2J4">
    <property type="glycosylation" value="4 sites"/>
</dbReference>
<dbReference type="iPTMnet" id="Q9D2J4"/>
<dbReference type="PhosphoSitePlus" id="Q9D2J4"/>
<dbReference type="PaxDb" id="10090-ENSMUSP00000033806"/>
<dbReference type="ProteomicsDB" id="297590">
    <molecule id="Q9D2J4-1"/>
</dbReference>
<dbReference type="ProteomicsDB" id="297591">
    <molecule id="Q9D2J4-2"/>
</dbReference>
<dbReference type="ABCD" id="Q9D2J4">
    <property type="antibodies" value="44 sequenced antibodies"/>
</dbReference>
<dbReference type="DNASU" id="78789"/>
<dbReference type="GeneID" id="78789"/>
<dbReference type="KEGG" id="mmu:78789"/>
<dbReference type="AGR" id="MGI:1926039"/>
<dbReference type="CTD" id="340547"/>
<dbReference type="MGI" id="MGI:1926039">
    <property type="gene designation" value="Vsig1"/>
</dbReference>
<dbReference type="eggNOG" id="ENOG502QU0R">
    <property type="taxonomic scope" value="Eukaryota"/>
</dbReference>
<dbReference type="InParanoid" id="Q9D2J4"/>
<dbReference type="OrthoDB" id="190835at2759"/>
<dbReference type="BioGRID-ORCS" id="78789">
    <property type="hits" value="1 hit in 79 CRISPR screens"/>
</dbReference>
<dbReference type="PRO" id="PR:Q9D2J4"/>
<dbReference type="Proteomes" id="UP000000589">
    <property type="component" value="Unplaced"/>
</dbReference>
<dbReference type="RNAct" id="Q9D2J4">
    <property type="molecule type" value="protein"/>
</dbReference>
<dbReference type="GO" id="GO:0016323">
    <property type="term" value="C:basolateral plasma membrane"/>
    <property type="evidence" value="ECO:0000314"/>
    <property type="project" value="MGI"/>
</dbReference>
<dbReference type="GO" id="GO:0005886">
    <property type="term" value="C:plasma membrane"/>
    <property type="evidence" value="ECO:0000314"/>
    <property type="project" value="MGI"/>
</dbReference>
<dbReference type="GO" id="GO:0003382">
    <property type="term" value="P:epithelial cell morphogenesis"/>
    <property type="evidence" value="ECO:0000315"/>
    <property type="project" value="MGI"/>
</dbReference>
<dbReference type="GO" id="GO:0030277">
    <property type="term" value="P:maintenance of gastrointestinal epithelium"/>
    <property type="evidence" value="ECO:0000315"/>
    <property type="project" value="MGI"/>
</dbReference>
<dbReference type="CDD" id="cd00096">
    <property type="entry name" value="Ig"/>
    <property type="match status" value="1"/>
</dbReference>
<dbReference type="FunFam" id="2.60.40.10:FF:000095">
    <property type="entry name" value="immunoglobulin superfamily member 11 isoform X1"/>
    <property type="match status" value="1"/>
</dbReference>
<dbReference type="FunFam" id="2.60.40.10:FF:000931">
    <property type="entry name" value="V-set and immunoglobulin domain containing 1"/>
    <property type="match status" value="1"/>
</dbReference>
<dbReference type="Gene3D" id="2.60.40.10">
    <property type="entry name" value="Immunoglobulins"/>
    <property type="match status" value="2"/>
</dbReference>
<dbReference type="InterPro" id="IPR007110">
    <property type="entry name" value="Ig-like_dom"/>
</dbReference>
<dbReference type="InterPro" id="IPR036179">
    <property type="entry name" value="Ig-like_dom_sf"/>
</dbReference>
<dbReference type="InterPro" id="IPR013783">
    <property type="entry name" value="Ig-like_fold"/>
</dbReference>
<dbReference type="InterPro" id="IPR003599">
    <property type="entry name" value="Ig_sub"/>
</dbReference>
<dbReference type="InterPro" id="IPR003598">
    <property type="entry name" value="Ig_sub2"/>
</dbReference>
<dbReference type="InterPro" id="IPR013106">
    <property type="entry name" value="Ig_V-set"/>
</dbReference>
<dbReference type="InterPro" id="IPR000920">
    <property type="entry name" value="Myelin_P0-rel"/>
</dbReference>
<dbReference type="InterPro" id="IPR029861">
    <property type="entry name" value="VSIG1"/>
</dbReference>
<dbReference type="PANTHER" id="PTHR44974">
    <property type="entry name" value="V-SET AND IMMUNOGLOBULIN DOMAIN-CONTAINING PROTEIN 1"/>
    <property type="match status" value="1"/>
</dbReference>
<dbReference type="PANTHER" id="PTHR44974:SF1">
    <property type="entry name" value="V-SET AND IMMUNOGLOBULIN DOMAIN-CONTAINING PROTEIN 1"/>
    <property type="match status" value="1"/>
</dbReference>
<dbReference type="Pfam" id="PF13927">
    <property type="entry name" value="Ig_3"/>
    <property type="match status" value="1"/>
</dbReference>
<dbReference type="Pfam" id="PF07686">
    <property type="entry name" value="V-set"/>
    <property type="match status" value="1"/>
</dbReference>
<dbReference type="PRINTS" id="PR00213">
    <property type="entry name" value="MYELINP0"/>
</dbReference>
<dbReference type="SMART" id="SM00409">
    <property type="entry name" value="IG"/>
    <property type="match status" value="2"/>
</dbReference>
<dbReference type="SMART" id="SM00408">
    <property type="entry name" value="IGc2"/>
    <property type="match status" value="2"/>
</dbReference>
<dbReference type="SUPFAM" id="SSF48726">
    <property type="entry name" value="Immunoglobulin"/>
    <property type="match status" value="2"/>
</dbReference>
<dbReference type="PROSITE" id="PS50835">
    <property type="entry name" value="IG_LIKE"/>
    <property type="match status" value="2"/>
</dbReference>
<organism>
    <name type="scientific">Mus musculus</name>
    <name type="common">Mouse</name>
    <dbReference type="NCBI Taxonomy" id="10090"/>
    <lineage>
        <taxon>Eukaryota</taxon>
        <taxon>Metazoa</taxon>
        <taxon>Chordata</taxon>
        <taxon>Craniata</taxon>
        <taxon>Vertebrata</taxon>
        <taxon>Euteleostomi</taxon>
        <taxon>Mammalia</taxon>
        <taxon>Eutheria</taxon>
        <taxon>Euarchontoglires</taxon>
        <taxon>Glires</taxon>
        <taxon>Rodentia</taxon>
        <taxon>Myomorpha</taxon>
        <taxon>Muroidea</taxon>
        <taxon>Muridae</taxon>
        <taxon>Murinae</taxon>
        <taxon>Mus</taxon>
        <taxon>Mus</taxon>
    </lineage>
</organism>
<reference key="1">
    <citation type="journal article" date="2006" name="Cancer Immun.">
        <title>Glycoprotein A34, a novel target for antibody-based cancer immunotherapy.</title>
        <authorList>
            <person name="Scanlan M.J."/>
            <person name="Ritter G."/>
            <person name="Yin B.W."/>
            <person name="Williams C. Jr."/>
            <person name="Cohen L.S."/>
            <person name="Coplan K.A."/>
            <person name="Fortunato S.R."/>
            <person name="Frosina D."/>
            <person name="Lee S.Y."/>
            <person name="Murray A.E."/>
            <person name="Chua R."/>
            <person name="Filonenko V.V."/>
            <person name="Sato E."/>
            <person name="Old L.J."/>
            <person name="Jungbluth A.A."/>
        </authorList>
    </citation>
    <scope>NUCLEOTIDE SEQUENCE [MRNA] (ISOFORM 1)</scope>
</reference>
<reference key="2">
    <citation type="journal article" date="2005" name="Science">
        <title>The transcriptional landscape of the mammalian genome.</title>
        <authorList>
            <person name="Carninci P."/>
            <person name="Kasukawa T."/>
            <person name="Katayama S."/>
            <person name="Gough J."/>
            <person name="Frith M.C."/>
            <person name="Maeda N."/>
            <person name="Oyama R."/>
            <person name="Ravasi T."/>
            <person name="Lenhard B."/>
            <person name="Wells C."/>
            <person name="Kodzius R."/>
            <person name="Shimokawa K."/>
            <person name="Bajic V.B."/>
            <person name="Brenner S.E."/>
            <person name="Batalov S."/>
            <person name="Forrest A.R."/>
            <person name="Zavolan M."/>
            <person name="Davis M.J."/>
            <person name="Wilming L.G."/>
            <person name="Aidinis V."/>
            <person name="Allen J.E."/>
            <person name="Ambesi-Impiombato A."/>
            <person name="Apweiler R."/>
            <person name="Aturaliya R.N."/>
            <person name="Bailey T.L."/>
            <person name="Bansal M."/>
            <person name="Baxter L."/>
            <person name="Beisel K.W."/>
            <person name="Bersano T."/>
            <person name="Bono H."/>
            <person name="Chalk A.M."/>
            <person name="Chiu K.P."/>
            <person name="Choudhary V."/>
            <person name="Christoffels A."/>
            <person name="Clutterbuck D.R."/>
            <person name="Crowe M.L."/>
            <person name="Dalla E."/>
            <person name="Dalrymple B.P."/>
            <person name="de Bono B."/>
            <person name="Della Gatta G."/>
            <person name="di Bernardo D."/>
            <person name="Down T."/>
            <person name="Engstrom P."/>
            <person name="Fagiolini M."/>
            <person name="Faulkner G."/>
            <person name="Fletcher C.F."/>
            <person name="Fukushima T."/>
            <person name="Furuno M."/>
            <person name="Futaki S."/>
            <person name="Gariboldi M."/>
            <person name="Georgii-Hemming P."/>
            <person name="Gingeras T.R."/>
            <person name="Gojobori T."/>
            <person name="Green R.E."/>
            <person name="Gustincich S."/>
            <person name="Harbers M."/>
            <person name="Hayashi Y."/>
            <person name="Hensch T.K."/>
            <person name="Hirokawa N."/>
            <person name="Hill D."/>
            <person name="Huminiecki L."/>
            <person name="Iacono M."/>
            <person name="Ikeo K."/>
            <person name="Iwama A."/>
            <person name="Ishikawa T."/>
            <person name="Jakt M."/>
            <person name="Kanapin A."/>
            <person name="Katoh M."/>
            <person name="Kawasawa Y."/>
            <person name="Kelso J."/>
            <person name="Kitamura H."/>
            <person name="Kitano H."/>
            <person name="Kollias G."/>
            <person name="Krishnan S.P."/>
            <person name="Kruger A."/>
            <person name="Kummerfeld S.K."/>
            <person name="Kurochkin I.V."/>
            <person name="Lareau L.F."/>
            <person name="Lazarevic D."/>
            <person name="Lipovich L."/>
            <person name="Liu J."/>
            <person name="Liuni S."/>
            <person name="McWilliam S."/>
            <person name="Madan Babu M."/>
            <person name="Madera M."/>
            <person name="Marchionni L."/>
            <person name="Matsuda H."/>
            <person name="Matsuzawa S."/>
            <person name="Miki H."/>
            <person name="Mignone F."/>
            <person name="Miyake S."/>
            <person name="Morris K."/>
            <person name="Mottagui-Tabar S."/>
            <person name="Mulder N."/>
            <person name="Nakano N."/>
            <person name="Nakauchi H."/>
            <person name="Ng P."/>
            <person name="Nilsson R."/>
            <person name="Nishiguchi S."/>
            <person name="Nishikawa S."/>
            <person name="Nori F."/>
            <person name="Ohara O."/>
            <person name="Okazaki Y."/>
            <person name="Orlando V."/>
            <person name="Pang K.C."/>
            <person name="Pavan W.J."/>
            <person name="Pavesi G."/>
            <person name="Pesole G."/>
            <person name="Petrovsky N."/>
            <person name="Piazza S."/>
            <person name="Reed J."/>
            <person name="Reid J.F."/>
            <person name="Ring B.Z."/>
            <person name="Ringwald M."/>
            <person name="Rost B."/>
            <person name="Ruan Y."/>
            <person name="Salzberg S.L."/>
            <person name="Sandelin A."/>
            <person name="Schneider C."/>
            <person name="Schoenbach C."/>
            <person name="Sekiguchi K."/>
            <person name="Semple C.A."/>
            <person name="Seno S."/>
            <person name="Sessa L."/>
            <person name="Sheng Y."/>
            <person name="Shibata Y."/>
            <person name="Shimada H."/>
            <person name="Shimada K."/>
            <person name="Silva D."/>
            <person name="Sinclair B."/>
            <person name="Sperling S."/>
            <person name="Stupka E."/>
            <person name="Sugiura K."/>
            <person name="Sultana R."/>
            <person name="Takenaka Y."/>
            <person name="Taki K."/>
            <person name="Tammoja K."/>
            <person name="Tan S.L."/>
            <person name="Tang S."/>
            <person name="Taylor M.S."/>
            <person name="Tegner J."/>
            <person name="Teichmann S.A."/>
            <person name="Ueda H.R."/>
            <person name="van Nimwegen E."/>
            <person name="Verardo R."/>
            <person name="Wei C.L."/>
            <person name="Yagi K."/>
            <person name="Yamanishi H."/>
            <person name="Zabarovsky E."/>
            <person name="Zhu S."/>
            <person name="Zimmer A."/>
            <person name="Hide W."/>
            <person name="Bult C."/>
            <person name="Grimmond S.M."/>
            <person name="Teasdale R.D."/>
            <person name="Liu E.T."/>
            <person name="Brusic V."/>
            <person name="Quackenbush J."/>
            <person name="Wahlestedt C."/>
            <person name="Mattick J.S."/>
            <person name="Hume D.A."/>
            <person name="Kai C."/>
            <person name="Sasaki D."/>
            <person name="Tomaru Y."/>
            <person name="Fukuda S."/>
            <person name="Kanamori-Katayama M."/>
            <person name="Suzuki M."/>
            <person name="Aoki J."/>
            <person name="Arakawa T."/>
            <person name="Iida J."/>
            <person name="Imamura K."/>
            <person name="Itoh M."/>
            <person name="Kato T."/>
            <person name="Kawaji H."/>
            <person name="Kawagashira N."/>
            <person name="Kawashima T."/>
            <person name="Kojima M."/>
            <person name="Kondo S."/>
            <person name="Konno H."/>
            <person name="Nakano K."/>
            <person name="Ninomiya N."/>
            <person name="Nishio T."/>
            <person name="Okada M."/>
            <person name="Plessy C."/>
            <person name="Shibata K."/>
            <person name="Shiraki T."/>
            <person name="Suzuki S."/>
            <person name="Tagami M."/>
            <person name="Waki K."/>
            <person name="Watahiki A."/>
            <person name="Okamura-Oho Y."/>
            <person name="Suzuki H."/>
            <person name="Kawai J."/>
            <person name="Hayashizaki Y."/>
        </authorList>
    </citation>
    <scope>NUCLEOTIDE SEQUENCE [LARGE SCALE MRNA] (ISOFORMS 1 AND 2)</scope>
    <source>
        <strain>C57BL/6J</strain>
        <tissue>Testis</tissue>
    </source>
</reference>
<reference key="3">
    <citation type="journal article" date="2010" name="Cell">
        <title>A tissue-specific atlas of mouse protein phosphorylation and expression.</title>
        <authorList>
            <person name="Huttlin E.L."/>
            <person name="Jedrychowski M.P."/>
            <person name="Elias J.E."/>
            <person name="Goswami T."/>
            <person name="Rad R."/>
            <person name="Beausoleil S.A."/>
            <person name="Villen J."/>
            <person name="Haas W."/>
            <person name="Sowa M.E."/>
            <person name="Gygi S.P."/>
        </authorList>
    </citation>
    <scope>PHOSPHORYLATION [LARGE SCALE ANALYSIS] AT SER-273 AND SER-274</scope>
    <scope>IDENTIFICATION BY MASS SPECTROMETRY [LARGE SCALE ANALYSIS]</scope>
    <source>
        <tissue>Testis</tissue>
    </source>
</reference>
<proteinExistence type="evidence at protein level"/>
<keyword id="KW-0025">Alternative splicing</keyword>
<keyword id="KW-1015">Disulfide bond</keyword>
<keyword id="KW-0325">Glycoprotein</keyword>
<keyword id="KW-0393">Immunoglobulin domain</keyword>
<keyword id="KW-0472">Membrane</keyword>
<keyword id="KW-0597">Phosphoprotein</keyword>
<keyword id="KW-1185">Reference proteome</keyword>
<keyword id="KW-0677">Repeat</keyword>
<keyword id="KW-0732">Signal</keyword>
<keyword id="KW-0812">Transmembrane</keyword>
<keyword id="KW-1133">Transmembrane helix</keyword>